<reference key="1">
    <citation type="journal article" date="1996" name="J. Parasitol.">
        <title>The putative acetyl-CoA synthetase gene of Cryptosporidium parvum and a new conserved protein motif in acetyl-CoA synthetases.</title>
        <authorList>
            <person name="Khramtsov N.V."/>
            <person name="Blunt D.S."/>
            <person name="Montelone B.A."/>
            <person name="Upton S.J."/>
        </authorList>
    </citation>
    <scope>NUCLEOTIDE SEQUENCE [GENOMIC DNA]</scope>
    <source>
        <strain>KSU-1</strain>
    </source>
</reference>
<comment type="catalytic activity">
    <reaction>
        <text>acetate + ATP + CoA = acetyl-CoA + AMP + diphosphate</text>
        <dbReference type="Rhea" id="RHEA:23176"/>
        <dbReference type="ChEBI" id="CHEBI:30089"/>
        <dbReference type="ChEBI" id="CHEBI:30616"/>
        <dbReference type="ChEBI" id="CHEBI:33019"/>
        <dbReference type="ChEBI" id="CHEBI:57287"/>
        <dbReference type="ChEBI" id="CHEBI:57288"/>
        <dbReference type="ChEBI" id="CHEBI:456215"/>
        <dbReference type="EC" id="6.2.1.1"/>
    </reaction>
</comment>
<comment type="similarity">
    <text evidence="3">Belongs to the ATP-dependent AMP-binding enzyme family.</text>
</comment>
<protein>
    <recommendedName>
        <fullName>Acetyl-coenzyme A synthetase</fullName>
        <ecNumber>6.2.1.1</ecNumber>
    </recommendedName>
    <alternativeName>
        <fullName>Acetate--CoA ligase</fullName>
    </alternativeName>
    <alternativeName>
        <fullName>Acyl-activating enzyme</fullName>
    </alternativeName>
</protein>
<accession>Q27549</accession>
<keyword id="KW-0067">ATP-binding</keyword>
<keyword id="KW-0436">Ligase</keyword>
<keyword id="KW-0547">Nucleotide-binding</keyword>
<proteinExistence type="inferred from homology"/>
<sequence>MSDKRPRSPCSNNNDELNDSSVLTENMDTVATRSKNLPFHETYKSKPTPADKPYRVDGIDKYKELYEQSIRDPEGFWSQMARKELRWLRDFTKVRSSGTCLQDRLAWFLNGKLNVCDNCVDRWAEIQPNTTALIWEGDDPSSIRHISYIELFRNVCKMANVLKRFGIKKGDSVGIYMPMIPETIYTMLACARIGAVHMVVFAGFAAQNLLERLVNARCKIVVTADQGSRGKKIINLKDVVDKALEKIPEIKTCIVFRHLNGPIEFVKGRDFDGETLMRSEKPYCPLEDMDSEDPLFYLYTSGSTGTPKGVQHSTAGYLLYAAVTQKYLFNIHPGDIFGCAGDIGWITGHSYLVYAPLCNGITTLIFEGVPTYPNAGRYWEMVERHRITHFYAAPTAIRTLKRLGDDFVKKHDRSSLRVLGSVGEPINPSAWRWYHSVVGEERCSIVDTYWQTETGGIVIAPIPGCFDTKPGSATFPFFGIEPAILDPDTGKEIDGPGSGVLCIKNSWPGMFRGIFGAHYLHEIYTKPFPKYYFTGDGVLRDQDGYLWITGRIDDTINVSGHRLSSKEIEDALTNHFGIAEAAAVAIDHDVKGNALVCFVVLKDSGNRTFDLNNSSPHPFEYELRMCVRTQIGPVATPDHIIVVENIPKTRSGKVVRRLLRKIATGCNDYGDISTVANPECIKSIESSWAQYLKR</sequence>
<name>ACSA_CRYPV</name>
<gene>
    <name type="primary">ACS</name>
</gene>
<dbReference type="EC" id="6.2.1.1"/>
<dbReference type="EMBL" id="U24082">
    <property type="protein sequence ID" value="AAC47128.1"/>
    <property type="molecule type" value="Genomic_DNA"/>
</dbReference>
<dbReference type="SMR" id="Q27549"/>
<dbReference type="VEuPathDB" id="CryptoDB:cgd1_3710"/>
<dbReference type="VEuPathDB" id="CryptoDB:CPATCC_0035560"/>
<dbReference type="GO" id="GO:0003987">
    <property type="term" value="F:acetate-CoA ligase activity"/>
    <property type="evidence" value="ECO:0007669"/>
    <property type="project" value="UniProtKB-EC"/>
</dbReference>
<dbReference type="GO" id="GO:0016208">
    <property type="term" value="F:AMP binding"/>
    <property type="evidence" value="ECO:0007669"/>
    <property type="project" value="InterPro"/>
</dbReference>
<dbReference type="GO" id="GO:0005524">
    <property type="term" value="F:ATP binding"/>
    <property type="evidence" value="ECO:0007669"/>
    <property type="project" value="UniProtKB-KW"/>
</dbReference>
<dbReference type="GO" id="GO:0019427">
    <property type="term" value="P:acetyl-CoA biosynthetic process from acetate"/>
    <property type="evidence" value="ECO:0007669"/>
    <property type="project" value="InterPro"/>
</dbReference>
<dbReference type="CDD" id="cd05966">
    <property type="entry name" value="ACS"/>
    <property type="match status" value="1"/>
</dbReference>
<dbReference type="FunFam" id="3.40.50.12780:FF:000001">
    <property type="entry name" value="Acetyl-coenzyme A synthetase"/>
    <property type="match status" value="1"/>
</dbReference>
<dbReference type="Gene3D" id="3.30.300.30">
    <property type="match status" value="1"/>
</dbReference>
<dbReference type="Gene3D" id="3.40.50.12780">
    <property type="entry name" value="N-terminal domain of ligase-like"/>
    <property type="match status" value="1"/>
</dbReference>
<dbReference type="InterPro" id="IPR011904">
    <property type="entry name" value="Ac_CoA_lig"/>
</dbReference>
<dbReference type="InterPro" id="IPR032387">
    <property type="entry name" value="ACAS_N"/>
</dbReference>
<dbReference type="InterPro" id="IPR025110">
    <property type="entry name" value="AMP-bd_C"/>
</dbReference>
<dbReference type="InterPro" id="IPR045851">
    <property type="entry name" value="AMP-bd_C_sf"/>
</dbReference>
<dbReference type="InterPro" id="IPR020845">
    <property type="entry name" value="AMP-binding_CS"/>
</dbReference>
<dbReference type="InterPro" id="IPR000873">
    <property type="entry name" value="AMP-dep_synth/lig_dom"/>
</dbReference>
<dbReference type="InterPro" id="IPR042099">
    <property type="entry name" value="ANL_N_sf"/>
</dbReference>
<dbReference type="NCBIfam" id="TIGR02188">
    <property type="entry name" value="Ac_CoA_lig_AcsA"/>
    <property type="match status" value="1"/>
</dbReference>
<dbReference type="NCBIfam" id="NF001208">
    <property type="entry name" value="PRK00174.1"/>
    <property type="match status" value="1"/>
</dbReference>
<dbReference type="PANTHER" id="PTHR24095">
    <property type="entry name" value="ACETYL-COENZYME A SYNTHETASE"/>
    <property type="match status" value="1"/>
</dbReference>
<dbReference type="PANTHER" id="PTHR24095:SF14">
    <property type="entry name" value="ACETYL-COENZYME A SYNTHETASE 1"/>
    <property type="match status" value="1"/>
</dbReference>
<dbReference type="Pfam" id="PF16177">
    <property type="entry name" value="ACAS_N"/>
    <property type="match status" value="1"/>
</dbReference>
<dbReference type="Pfam" id="PF00501">
    <property type="entry name" value="AMP-binding"/>
    <property type="match status" value="1"/>
</dbReference>
<dbReference type="Pfam" id="PF13193">
    <property type="entry name" value="AMP-binding_C"/>
    <property type="match status" value="1"/>
</dbReference>
<dbReference type="SUPFAM" id="SSF56801">
    <property type="entry name" value="Acetyl-CoA synthetase-like"/>
    <property type="match status" value="1"/>
</dbReference>
<dbReference type="PROSITE" id="PS00455">
    <property type="entry name" value="AMP_BINDING"/>
    <property type="match status" value="1"/>
</dbReference>
<organism>
    <name type="scientific">Cryptosporidium parvum</name>
    <dbReference type="NCBI Taxonomy" id="5807"/>
    <lineage>
        <taxon>Eukaryota</taxon>
        <taxon>Sar</taxon>
        <taxon>Alveolata</taxon>
        <taxon>Apicomplexa</taxon>
        <taxon>Conoidasida</taxon>
        <taxon>Coccidia</taxon>
        <taxon>Eucoccidiorida</taxon>
        <taxon>Eimeriorina</taxon>
        <taxon>Cryptosporidiidae</taxon>
        <taxon>Cryptosporidium</taxon>
    </lineage>
</organism>
<evidence type="ECO:0000250" key="1"/>
<evidence type="ECO:0000256" key="2">
    <source>
        <dbReference type="SAM" id="MobiDB-lite"/>
    </source>
</evidence>
<evidence type="ECO:0000305" key="3"/>
<feature type="chain" id="PRO_0000208410" description="Acetyl-coenzyme A synthetase">
    <location>
        <begin position="1"/>
        <end position="694"/>
    </location>
</feature>
<feature type="region of interest" description="Disordered" evidence="2">
    <location>
        <begin position="1"/>
        <end position="23"/>
    </location>
</feature>
<feature type="compositionally biased region" description="Polar residues" evidence="2">
    <location>
        <begin position="9"/>
        <end position="23"/>
    </location>
</feature>
<feature type="binding site" evidence="1">
    <location>
        <begin position="229"/>
        <end position="232"/>
    </location>
    <ligand>
        <name>CoA</name>
        <dbReference type="ChEBI" id="CHEBI:57287"/>
    </ligand>
</feature>
<feature type="binding site" evidence="1">
    <location>
        <position position="347"/>
    </location>
    <ligand>
        <name>CoA</name>
        <dbReference type="ChEBI" id="CHEBI:57287"/>
    </ligand>
</feature>
<feature type="binding site" evidence="1">
    <location>
        <begin position="423"/>
        <end position="425"/>
    </location>
    <ligand>
        <name>ATP</name>
        <dbReference type="ChEBI" id="CHEBI:30616"/>
    </ligand>
</feature>
<feature type="binding site" evidence="1">
    <location>
        <begin position="447"/>
        <end position="452"/>
    </location>
    <ligand>
        <name>ATP</name>
        <dbReference type="ChEBI" id="CHEBI:30616"/>
    </ligand>
</feature>
<feature type="binding site" evidence="1">
    <location>
        <position position="536"/>
    </location>
    <ligand>
        <name>ATP</name>
        <dbReference type="ChEBI" id="CHEBI:30616"/>
    </ligand>
</feature>
<feature type="binding site" evidence="1">
    <location>
        <position position="551"/>
    </location>
    <ligand>
        <name>ATP</name>
        <dbReference type="ChEBI" id="CHEBI:30616"/>
    </ligand>
</feature>
<feature type="binding site" evidence="1">
    <location>
        <position position="559"/>
    </location>
    <ligand>
        <name>CoA</name>
        <dbReference type="ChEBI" id="CHEBI:57287"/>
    </ligand>
</feature>
<feature type="binding site" evidence="1">
    <location>
        <position position="562"/>
    </location>
    <ligand>
        <name>ATP</name>
        <dbReference type="ChEBI" id="CHEBI:30616"/>
    </ligand>
</feature>
<feature type="binding site" evidence="1">
    <location>
        <position position="628"/>
    </location>
    <ligand>
        <name>CoA</name>
        <dbReference type="ChEBI" id="CHEBI:57287"/>
    </ligand>
</feature>